<dbReference type="EC" id="6.5.1.8" evidence="1"/>
<dbReference type="EMBL" id="CAID01000010">
    <property type="protein sequence ID" value="CAL56150.1"/>
    <property type="molecule type" value="Genomic_DNA"/>
</dbReference>
<dbReference type="RefSeq" id="XP_003081626.1">
    <property type="nucleotide sequence ID" value="XM_003081578.1"/>
</dbReference>
<dbReference type="SMR" id="Q00ZY2"/>
<dbReference type="STRING" id="70448.Q00ZY2"/>
<dbReference type="GeneID" id="9832166"/>
<dbReference type="KEGG" id="ota:OT_ostta10g01920"/>
<dbReference type="eggNOG" id="KOG3833">
    <property type="taxonomic scope" value="Eukaryota"/>
</dbReference>
<dbReference type="InParanoid" id="Q00ZY2"/>
<dbReference type="OMA" id="QTRGVEC"/>
<dbReference type="OrthoDB" id="10249697at2759"/>
<dbReference type="Proteomes" id="UP000009170">
    <property type="component" value="Chromosome 10"/>
</dbReference>
<dbReference type="GO" id="GO:0005634">
    <property type="term" value="C:nucleus"/>
    <property type="evidence" value="ECO:0007669"/>
    <property type="project" value="TreeGrafter"/>
</dbReference>
<dbReference type="GO" id="GO:0072669">
    <property type="term" value="C:tRNA-splicing ligase complex"/>
    <property type="evidence" value="ECO:0007669"/>
    <property type="project" value="UniProtKB-UniRule"/>
</dbReference>
<dbReference type="GO" id="GO:0005525">
    <property type="term" value="F:GTP binding"/>
    <property type="evidence" value="ECO:0007669"/>
    <property type="project" value="UniProtKB-KW"/>
</dbReference>
<dbReference type="GO" id="GO:0046872">
    <property type="term" value="F:metal ion binding"/>
    <property type="evidence" value="ECO:0007669"/>
    <property type="project" value="UniProtKB-KW"/>
</dbReference>
<dbReference type="GO" id="GO:0003972">
    <property type="term" value="F:RNA ligase (ATP) activity"/>
    <property type="evidence" value="ECO:0007669"/>
    <property type="project" value="TreeGrafter"/>
</dbReference>
<dbReference type="GO" id="GO:0170057">
    <property type="term" value="F:RNA ligase (GTP) activity"/>
    <property type="evidence" value="ECO:0007669"/>
    <property type="project" value="UniProtKB-EC"/>
</dbReference>
<dbReference type="GO" id="GO:0006388">
    <property type="term" value="P:tRNA splicing, via endonucleolytic cleavage and ligation"/>
    <property type="evidence" value="ECO:0007669"/>
    <property type="project" value="UniProtKB-UniRule"/>
</dbReference>
<dbReference type="FunFam" id="3.90.1860.10:FF:000001">
    <property type="entry name" value="tRNA-splicing ligase RtcB homolog"/>
    <property type="match status" value="1"/>
</dbReference>
<dbReference type="Gene3D" id="3.90.1860.10">
    <property type="entry name" value="tRNA-splicing ligase RtcB"/>
    <property type="match status" value="1"/>
</dbReference>
<dbReference type="HAMAP" id="MF_03144">
    <property type="entry name" value="RtcB_euk"/>
    <property type="match status" value="1"/>
</dbReference>
<dbReference type="InterPro" id="IPR001233">
    <property type="entry name" value="RtcB"/>
</dbReference>
<dbReference type="InterPro" id="IPR036025">
    <property type="entry name" value="RtcB-like_sf"/>
</dbReference>
<dbReference type="InterPro" id="IPR027513">
    <property type="entry name" value="RtcB_euk"/>
</dbReference>
<dbReference type="PANTHER" id="PTHR11118">
    <property type="entry name" value="RNA-SPLICING LIGASE RTCB HOMOLOG"/>
    <property type="match status" value="1"/>
</dbReference>
<dbReference type="PANTHER" id="PTHR11118:SF1">
    <property type="entry name" value="RNA-SPLICING LIGASE RTCB HOMOLOG"/>
    <property type="match status" value="1"/>
</dbReference>
<dbReference type="Pfam" id="PF01139">
    <property type="entry name" value="RtcB"/>
    <property type="match status" value="1"/>
</dbReference>
<dbReference type="SUPFAM" id="SSF103365">
    <property type="entry name" value="Hypothetical protein PH1602"/>
    <property type="match status" value="1"/>
</dbReference>
<protein>
    <recommendedName>
        <fullName evidence="1">RNA-splicing ligase RtcB homolog</fullName>
        <ecNumber evidence="1">6.5.1.8</ecNumber>
    </recommendedName>
    <alternativeName>
        <fullName evidence="1">3'-phosphate/5'-hydroxy nucleic acid ligase</fullName>
    </alternativeName>
</protein>
<reference key="1">
    <citation type="journal article" date="2006" name="Proc. Natl. Acad. Sci. U.S.A.">
        <title>Genome analysis of the smallest free-living eukaryote Ostreococcus tauri unveils many unique features.</title>
        <authorList>
            <person name="Derelle E."/>
            <person name="Ferraz C."/>
            <person name="Rombauts S."/>
            <person name="Rouze P."/>
            <person name="Worden A.Z."/>
            <person name="Robbens S."/>
            <person name="Partensky F."/>
            <person name="Degroeve S."/>
            <person name="Echeynie S."/>
            <person name="Cooke R."/>
            <person name="Saeys Y."/>
            <person name="Wuyts J."/>
            <person name="Jabbari K."/>
            <person name="Bowler C."/>
            <person name="Panaud O."/>
            <person name="Piegu B."/>
            <person name="Ball S.G."/>
            <person name="Ral J.-P."/>
            <person name="Bouget F.-Y."/>
            <person name="Piganeau G."/>
            <person name="De Baets B."/>
            <person name="Picard A."/>
            <person name="Delseny M."/>
            <person name="Demaille J."/>
            <person name="Van de Peer Y."/>
            <person name="Moreau H."/>
        </authorList>
    </citation>
    <scope>NUCLEOTIDE SEQUENCE [LARGE SCALE GENOMIC DNA]</scope>
    <source>
        <strain>OTTH0595</strain>
    </source>
</reference>
<proteinExistence type="inferred from homology"/>
<sequence length="515" mass="55609">MAPATEAAPARTYDDEAAYVTVDDAHRVRVARGFVPNMRVDGVVYVNAALRALVLEELAAYCDATAHRGGGYSPALKQIANVAALPGVVGASIALPDVHSGYGFAIGNVAAFDVGDETSIVSPGGVGFDINCGVRLLRTNLTEAEVGPVKEALAQSLFDHIPVGVGSRGIIPTTPAALEAVLEMGMDWSLREGYAWAEDKEHTEEYGRMLNADPSKVSARAKKRGLPQMGTLGAGNHYAEIQVVDEIYDEFAAKKMGIDRVGQVCIMIHSGSRGLGHQVATDSLTAMERAMERDGIEVNDRQLACARISSQEGQDYLAAMACAANYAWVNRSSMTFLCRQAFAKMFGKPPDELDMHVVYDVSHNIAKFEEHMVDGEMKTLLVHRKGSTRAFPPHHPLIPVDYQYTGQPVLIGGTMGTCSYILTGTEKGMRDTFGSTCHGAGRARSRNKSRHVLQYEDVLEKLKTKGIAIRVASPKLVMEEAPESYKDVTEVVNTCHDAGISKKCVKLRPIAVVKG</sequence>
<gene>
    <name type="ordered locus">Ot10g01930</name>
</gene>
<feature type="chain" id="PRO_0000407237" description="RNA-splicing ligase RtcB homolog">
    <location>
        <begin position="1"/>
        <end position="515"/>
    </location>
</feature>
<feature type="active site" description="GMP-histidine intermediate" evidence="1">
    <location>
        <position position="438"/>
    </location>
</feature>
<feature type="binding site" evidence="1">
    <location>
        <position position="129"/>
    </location>
    <ligand>
        <name>Mn(2+)</name>
        <dbReference type="ChEBI" id="CHEBI:29035"/>
        <label>1</label>
    </ligand>
</feature>
<feature type="binding site" evidence="1">
    <location>
        <position position="132"/>
    </location>
    <ligand>
        <name>Mn(2+)</name>
        <dbReference type="ChEBI" id="CHEBI:29035"/>
        <label>1</label>
    </ligand>
</feature>
<feature type="binding site" evidence="1">
    <location>
        <position position="132"/>
    </location>
    <ligand>
        <name>Mn(2+)</name>
        <dbReference type="ChEBI" id="CHEBI:29035"/>
        <label>2</label>
    </ligand>
</feature>
<feature type="binding site" evidence="1">
    <location>
        <begin position="236"/>
        <end position="240"/>
    </location>
    <ligand>
        <name>GMP</name>
        <dbReference type="ChEBI" id="CHEBI:58115"/>
    </ligand>
</feature>
<feature type="binding site" evidence="1">
    <location>
        <position position="237"/>
    </location>
    <ligand>
        <name>Mn(2+)</name>
        <dbReference type="ChEBI" id="CHEBI:29035"/>
        <label>1</label>
    </ligand>
</feature>
<feature type="binding site" evidence="1">
    <location>
        <position position="269"/>
    </location>
    <ligand>
        <name>Mn(2+)</name>
        <dbReference type="ChEBI" id="CHEBI:29035"/>
        <label>2</label>
    </ligand>
</feature>
<feature type="binding site" evidence="1">
    <location>
        <begin position="363"/>
        <end position="364"/>
    </location>
    <ligand>
        <name>GMP</name>
        <dbReference type="ChEBI" id="CHEBI:58115"/>
    </ligand>
</feature>
<feature type="binding site" evidence="1">
    <location>
        <position position="363"/>
    </location>
    <ligand>
        <name>Mn(2+)</name>
        <dbReference type="ChEBI" id="CHEBI:29035"/>
        <label>2</label>
    </ligand>
</feature>
<feature type="binding site" evidence="1">
    <location>
        <begin position="412"/>
        <end position="415"/>
    </location>
    <ligand>
        <name>GMP</name>
        <dbReference type="ChEBI" id="CHEBI:58115"/>
    </ligand>
</feature>
<feature type="binding site" evidence="1">
    <location>
        <position position="419"/>
    </location>
    <ligand>
        <name>GMP</name>
        <dbReference type="ChEBI" id="CHEBI:58115"/>
    </ligand>
</feature>
<feature type="binding site" evidence="1">
    <location>
        <begin position="438"/>
        <end position="441"/>
    </location>
    <ligand>
        <name>GMP</name>
        <dbReference type="ChEBI" id="CHEBI:58115"/>
    </ligand>
</feature>
<feature type="binding site" evidence="1">
    <location>
        <position position="514"/>
    </location>
    <ligand>
        <name>GMP</name>
        <dbReference type="ChEBI" id="CHEBI:58115"/>
    </ligand>
</feature>
<accession>Q00ZY2</accession>
<evidence type="ECO:0000255" key="1">
    <source>
        <dbReference type="HAMAP-Rule" id="MF_03144"/>
    </source>
</evidence>
<name>RTCB_OSTTA</name>
<organism>
    <name type="scientific">Ostreococcus tauri</name>
    <dbReference type="NCBI Taxonomy" id="70448"/>
    <lineage>
        <taxon>Eukaryota</taxon>
        <taxon>Viridiplantae</taxon>
        <taxon>Chlorophyta</taxon>
        <taxon>Mamiellophyceae</taxon>
        <taxon>Mamiellales</taxon>
        <taxon>Bathycoccaceae</taxon>
        <taxon>Ostreococcus</taxon>
    </lineage>
</organism>
<keyword id="KW-0342">GTP-binding</keyword>
<keyword id="KW-0436">Ligase</keyword>
<keyword id="KW-0464">Manganese</keyword>
<keyword id="KW-0479">Metal-binding</keyword>
<keyword id="KW-0547">Nucleotide-binding</keyword>
<keyword id="KW-1185">Reference proteome</keyword>
<keyword id="KW-0819">tRNA processing</keyword>
<comment type="function">
    <text evidence="1">Catalytic subunit of the tRNA-splicing ligase complex that acts by directly joining spliced tRNA halves to mature-sized tRNAs by incorporating the precursor-derived splice junction phosphate into the mature tRNA as a canonical 3',5'-phosphodiester. May act as an RNA ligase with broad substrate specificity, and may function toward other RNAs.</text>
</comment>
<comment type="catalytic activity">
    <reaction evidence="1">
        <text>a 3'-end 3'-phospho-ribonucleotide-RNA + a 5'-end dephospho-ribonucleoside-RNA + GTP = a ribonucleotidyl-ribonucleotide-RNA + GMP + diphosphate</text>
        <dbReference type="Rhea" id="RHEA:68076"/>
        <dbReference type="Rhea" id="RHEA-COMP:10463"/>
        <dbReference type="Rhea" id="RHEA-COMP:13936"/>
        <dbReference type="Rhea" id="RHEA-COMP:17355"/>
        <dbReference type="ChEBI" id="CHEBI:33019"/>
        <dbReference type="ChEBI" id="CHEBI:37565"/>
        <dbReference type="ChEBI" id="CHEBI:58115"/>
        <dbReference type="ChEBI" id="CHEBI:83062"/>
        <dbReference type="ChEBI" id="CHEBI:138284"/>
        <dbReference type="ChEBI" id="CHEBI:173118"/>
        <dbReference type="EC" id="6.5.1.8"/>
    </reaction>
</comment>
<comment type="catalytic activity">
    <reaction evidence="1">
        <text>a 3'-end 2',3'-cyclophospho-ribonucleotide-RNA + a 5'-end dephospho-ribonucleoside-RNA + GTP + H2O = a ribonucleotidyl-ribonucleotide-RNA + GMP + diphosphate + H(+)</text>
        <dbReference type="Rhea" id="RHEA:68080"/>
        <dbReference type="Rhea" id="RHEA-COMP:10464"/>
        <dbReference type="Rhea" id="RHEA-COMP:13936"/>
        <dbReference type="Rhea" id="RHEA-COMP:17355"/>
        <dbReference type="ChEBI" id="CHEBI:15377"/>
        <dbReference type="ChEBI" id="CHEBI:15378"/>
        <dbReference type="ChEBI" id="CHEBI:33019"/>
        <dbReference type="ChEBI" id="CHEBI:37565"/>
        <dbReference type="ChEBI" id="CHEBI:58115"/>
        <dbReference type="ChEBI" id="CHEBI:83064"/>
        <dbReference type="ChEBI" id="CHEBI:138284"/>
        <dbReference type="ChEBI" id="CHEBI:173118"/>
        <dbReference type="EC" id="6.5.1.8"/>
    </reaction>
</comment>
<comment type="cofactor">
    <cofactor evidence="1">
        <name>Mn(2+)</name>
        <dbReference type="ChEBI" id="CHEBI:29035"/>
    </cofactor>
    <text evidence="1">Binds 2 manganese ions per subunit.</text>
</comment>
<comment type="subunit">
    <text evidence="1">Catalytic component of the tRNA-splicing ligase complex.</text>
</comment>
<comment type="miscellaneous">
    <text evidence="1">Ligation probably proceeds through 3 nucleotidyl transfer steps, with 2',3'-cyclic phosphate termini being hydrolyzed to 3'-P termini in a step that precedes 3'-P activation with GMP. In the first nucleotidyl transfer step, RTCB reacts with GTP to form a covalent RTCB-histidine-GMP intermediate with release of PPi; in the second step, the GMP moiety is transferred to the RNA 3'-P; in the third step, the 5'-OH from the opposite RNA strand attacks the activated 3'-P to form a 3',5'-phosphodiester bond and release GMP.</text>
</comment>
<comment type="similarity">
    <text evidence="1">Belongs to the RtcB family.</text>
</comment>